<gene>
    <name evidence="15" type="primary">SCN3B</name>
    <name type="synonym">KIAA1158</name>
</gene>
<comment type="function">
    <text evidence="1 4 8 9 10 11 12">Regulatory subunit of multiple voltage-gated sodium (Nav) channels directly mediating the depolarization of excitable membranes. Navs, also called VGSCs (voltage-gated sodium channels) or VDSCs (voltage-dependent sodium channels), operate by switching between closed and open conformations depending on the voltage difference across the membrane. In the open conformation they allow Na(+) ions to selectively pass through the pore, along their electrochemical gradient. The influx of Na+ ions provokes membrane depolarization, initiating the propagation of electrical signals throughout cells and tissues. The accessory beta subunits participate in localization and functional modulation of the Nav channels (PubMed:20558140, PubMed:21051419). Modulates the activity of SCN2A/Nav1.2, causing a hyperpolarizing shift in the voltage-dependence of inactivation of the channel and increasing the fraction of channels operating in the fast gating mode (By similarity). Modulates the activity of SCN5A/Nav1.5 (PubMed:20558140, PubMed:21051419, PubMed:24567321, PubMed:31950564). Could also regulate the atypical sodium channel SCN7A/Nav2.1 (PubMed:35301303). Modulates the activity of SCN10A/Nav1.8, regulating its oligomerization and accelerating the recovery from inactivation (PubMed:14975698).</text>
</comment>
<comment type="subunit">
    <text evidence="1 10 12">A voltage-gated sodium (Nav) channel consists of an ion-conducting pore-forming alpha subunit functional on its own that is regulated by one or more beta subunits (PubMed:24567321). Forms homodimers and homotrimers (PubMed:24567321). SCN3B is non-covalently associated with alpha subunits and induces the formation of alpha subunit oligomers, including trimers (PubMed:24567321, PubMed:35301303). Interacts with SCN5A/Nav1.5; regulatory subunit of SCN5A/Nav1.5 (PubMed:24567321). Interacts with SCN7A/Nav2.1; probable regulatory subunit of SCN7A/Nav2.1 (PubMed:35301303). Interacts with SCN10A; regulatory subunit of SCN10A/Nav1.8 (By similarity). Interacts with NFASC; probably involved in targeting the sodium channels to the nodes of Ranvier (By similarity).</text>
</comment>
<comment type="interaction">
    <interactant intactId="EBI-17247926">
        <id>Q9NY72</id>
    </interactant>
    <interactant intactId="EBI-10827839">
        <id>Q15848</id>
        <label>ADIPOQ</label>
    </interactant>
    <organismsDiffer>false</organismsDiffer>
    <experiments>3</experiments>
</comment>
<comment type="interaction">
    <interactant intactId="EBI-17247926">
        <id>Q9NY72</id>
    </interactant>
    <interactant intactId="EBI-1754287">
        <id>Q9NRZ5</id>
        <label>AGPAT4</label>
    </interactant>
    <organismsDiffer>false</organismsDiffer>
    <experiments>3</experiments>
</comment>
<comment type="interaction">
    <interactant intactId="EBI-17247926">
        <id>Q9NY72</id>
    </interactant>
    <interactant intactId="EBI-6916385">
        <id>Q9NUQ2</id>
        <label>AGPAT5</label>
    </interactant>
    <organismsDiffer>false</organismsDiffer>
    <experiments>3</experiments>
</comment>
<comment type="interaction">
    <interactant intactId="EBI-17247926">
        <id>Q9NY72</id>
    </interactant>
    <interactant intactId="EBI-12109402">
        <id>Q86W74-2</id>
        <label>ANKRD46</label>
    </interactant>
    <organismsDiffer>false</organismsDiffer>
    <experiments>3</experiments>
</comment>
<comment type="interaction">
    <interactant intactId="EBI-17247926">
        <id>Q9NY72</id>
    </interactant>
    <interactant intactId="EBI-12820279">
        <id>Q96PS8</id>
        <label>AQP10</label>
    </interactant>
    <organismsDiffer>false</organismsDiffer>
    <experiments>3</experiments>
</comment>
<comment type="interaction">
    <interactant intactId="EBI-17247926">
        <id>Q9NY72</id>
    </interactant>
    <interactant intactId="EBI-11724186">
        <id>Q9H2C2</id>
        <label>ARV1</label>
    </interactant>
    <organismsDiffer>false</organismsDiffer>
    <experiments>5</experiments>
</comment>
<comment type="interaction">
    <interactant intactId="EBI-17247926">
        <id>Q9NY72</id>
    </interactant>
    <interactant intactId="EBI-12069500">
        <id>Q9HD20-3</id>
        <label>ATP13A1</label>
    </interactant>
    <organismsDiffer>false</organismsDiffer>
    <experiments>3</experiments>
</comment>
<comment type="interaction">
    <interactant intactId="EBI-17247926">
        <id>Q9NY72</id>
    </interactant>
    <interactant intactId="EBI-721179">
        <id>P27449</id>
        <label>ATP6V0C</label>
    </interactant>
    <organismsDiffer>false</organismsDiffer>
    <experiments>3</experiments>
</comment>
<comment type="interaction">
    <interactant intactId="EBI-17247926">
        <id>Q9NY72</id>
    </interactant>
    <interactant intactId="EBI-4402847">
        <id>Q12981</id>
        <label>BNIP1</label>
    </interactant>
    <organismsDiffer>false</organismsDiffer>
    <experiments>3</experiments>
</comment>
<comment type="interaction">
    <interactant intactId="EBI-17247926">
        <id>Q9NY72</id>
    </interactant>
    <interactant intactId="EBI-749464">
        <id>Q12983</id>
        <label>BNIP3</label>
    </interactant>
    <organismsDiffer>false</organismsDiffer>
    <experiments>3</experiments>
</comment>
<comment type="interaction">
    <interactant intactId="EBI-17247926">
        <id>Q9NY72</id>
    </interactant>
    <interactant intactId="EBI-12244618">
        <id>Q6PL45-2</id>
        <label>BRICD5</label>
    </interactant>
    <organismsDiffer>false</organismsDiffer>
    <experiments>3</experiments>
</comment>
<comment type="interaction">
    <interactant intactId="EBI-17247926">
        <id>Q9NY72</id>
    </interactant>
    <interactant intactId="EBI-12019274">
        <id>Q4LDR2</id>
        <label>CTXN3</label>
    </interactant>
    <organismsDiffer>false</organismsDiffer>
    <experiments>3</experiments>
</comment>
<comment type="interaction">
    <interactant intactId="EBI-17247926">
        <id>Q9NY72</id>
    </interactant>
    <interactant intactId="EBI-1752413">
        <id>P78329</id>
        <label>CYP4F2</label>
    </interactant>
    <organismsDiffer>false</organismsDiffer>
    <experiments>3</experiments>
</comment>
<comment type="interaction">
    <interactant intactId="EBI-17247926">
        <id>Q9NY72</id>
    </interactant>
    <interactant intactId="EBI-12074168">
        <id>P81534</id>
        <label>DEFB103B</label>
    </interactant>
    <organismsDiffer>false</organismsDiffer>
    <experiments>3</experiments>
</comment>
<comment type="interaction">
    <interactant intactId="EBI-17247926">
        <id>Q9NY72</id>
    </interactant>
    <interactant intactId="EBI-398977">
        <id>Q9BUN8</id>
        <label>DERL1</label>
    </interactant>
    <organismsDiffer>false</organismsDiffer>
    <experiments>3</experiments>
</comment>
<comment type="interaction">
    <interactant intactId="EBI-17247926">
        <id>Q9NY72</id>
    </interactant>
    <interactant intactId="EBI-12831978">
        <id>Q6ZPD8</id>
        <label>DGAT2L6</label>
    </interactant>
    <organismsDiffer>false</organismsDiffer>
    <experiments>3</experiments>
</comment>
<comment type="interaction">
    <interactant intactId="EBI-17247926">
        <id>Q9NY72</id>
    </interactant>
    <interactant intactId="EBI-711490">
        <id>Q9UKR5</id>
        <label>ERG28</label>
    </interactant>
    <organismsDiffer>false</organismsDiffer>
    <experiments>4</experiments>
</comment>
<comment type="interaction">
    <interactant intactId="EBI-17247926">
        <id>Q9NY72</id>
    </interactant>
    <interactant intactId="EBI-12118888">
        <id>Q96D05-2</id>
        <label>FAM241B</label>
    </interactant>
    <organismsDiffer>false</organismsDiffer>
    <experiments>3</experiments>
</comment>
<comment type="interaction">
    <interactant intactId="EBI-17247926">
        <id>Q9NY72</id>
    </interactant>
    <interactant intactId="EBI-2876774">
        <id>Q92520</id>
        <label>FAM3C</label>
    </interactant>
    <organismsDiffer>false</organismsDiffer>
    <experiments>3</experiments>
</comment>
<comment type="interaction">
    <interactant intactId="EBI-17247926">
        <id>Q9NY72</id>
    </interactant>
    <interactant intactId="EBI-3385283">
        <id>Q9Y3D6</id>
        <label>FIS1</label>
    </interactant>
    <organismsDiffer>false</organismsDiffer>
    <experiments>3</experiments>
</comment>
<comment type="interaction">
    <interactant intactId="EBI-17247926">
        <id>Q9NY72</id>
    </interactant>
    <interactant intactId="EBI-724839">
        <id>Q14318</id>
        <label>FKBP8</label>
    </interactant>
    <organismsDiffer>false</organismsDiffer>
    <experiments>3</experiments>
</comment>
<comment type="interaction">
    <interactant intactId="EBI-17247926">
        <id>Q9NY72</id>
    </interactant>
    <interactant intactId="EBI-12175685">
        <id>Q14802-3</id>
        <label>FXYD3</label>
    </interactant>
    <organismsDiffer>false</organismsDiffer>
    <experiments>3</experiments>
</comment>
<comment type="interaction">
    <interactant intactId="EBI-17247926">
        <id>Q9NY72</id>
    </interactant>
    <interactant intactId="EBI-11991950">
        <id>Q8WWP7</id>
        <label>GIMAP1</label>
    </interactant>
    <organismsDiffer>false</organismsDiffer>
    <experiments>3</experiments>
</comment>
<comment type="interaction">
    <interactant intactId="EBI-17247926">
        <id>Q9NY72</id>
    </interactant>
    <interactant intactId="EBI-6166686">
        <id>Q96F15</id>
        <label>GIMAP5</label>
    </interactant>
    <organismsDiffer>false</organismsDiffer>
    <experiments>3</experiments>
</comment>
<comment type="interaction">
    <interactant intactId="EBI-17247926">
        <id>Q9NY72</id>
    </interactant>
    <interactant intactId="EBI-11955647">
        <id>Q8TDV0</id>
        <label>GPR151</label>
    </interactant>
    <organismsDiffer>false</organismsDiffer>
    <experiments>3</experiments>
</comment>
<comment type="interaction">
    <interactant intactId="EBI-17247926">
        <id>Q9NY72</id>
    </interactant>
    <interactant intactId="EBI-12808020">
        <id>Q9BZJ8</id>
        <label>GPR61</label>
    </interactant>
    <organismsDiffer>false</organismsDiffer>
    <experiments>3</experiments>
</comment>
<comment type="interaction">
    <interactant intactId="EBI-17247926">
        <id>Q9NY72</id>
    </interactant>
    <interactant intactId="EBI-725665">
        <id>Q9Y5U9</id>
        <label>IER3IP1</label>
    </interactant>
    <organismsDiffer>false</organismsDiffer>
    <experiments>3</experiments>
</comment>
<comment type="interaction">
    <interactant intactId="EBI-17247926">
        <id>Q9NY72</id>
    </interactant>
    <interactant intactId="EBI-8503746">
        <id>Q9Y5U4</id>
        <label>INSIG2</label>
    </interactant>
    <organismsDiffer>false</organismsDiffer>
    <experiments>3</experiments>
</comment>
<comment type="interaction">
    <interactant intactId="EBI-17247926">
        <id>Q9NY72</id>
    </interactant>
    <interactant intactId="EBI-17249161">
        <id>Q6H9L7</id>
        <label>ISM2</label>
    </interactant>
    <organismsDiffer>false</organismsDiffer>
    <experiments>3</experiments>
</comment>
<comment type="interaction">
    <interactant intactId="EBI-17247926">
        <id>Q9NY72</id>
    </interactant>
    <interactant intactId="EBI-2568251">
        <id>P11215</id>
        <label>ITGAM</label>
    </interactant>
    <organismsDiffer>false</organismsDiffer>
    <experiments>3</experiments>
</comment>
<comment type="interaction">
    <interactant intactId="EBI-17247926">
        <id>Q9NY72</id>
    </interactant>
    <interactant intactId="EBI-12268900">
        <id>Q68G75</id>
        <label>LEMD1</label>
    </interactant>
    <organismsDiffer>false</organismsDiffer>
    <experiments>3</experiments>
</comment>
<comment type="interaction">
    <interactant intactId="EBI-17247926">
        <id>Q9NY72</id>
    </interactant>
    <interactant intactId="EBI-750776">
        <id>O95214</id>
        <label>LEPROTL1</label>
    </interactant>
    <organismsDiffer>false</organismsDiffer>
    <experiments>3</experiments>
</comment>
<comment type="interaction">
    <interactant intactId="EBI-17247926">
        <id>Q9NY72</id>
    </interactant>
    <interactant intactId="EBI-12033434">
        <id>Q9UBY5</id>
        <label>LPAR3</label>
    </interactant>
    <organismsDiffer>false</organismsDiffer>
    <experiments>3</experiments>
</comment>
<comment type="interaction">
    <interactant intactId="EBI-17247926">
        <id>Q9NY72</id>
    </interactant>
    <interactant intactId="EBI-944295">
        <id>Q969L2</id>
        <label>MAL2</label>
    </interactant>
    <organismsDiffer>false</organismsDiffer>
    <experiments>3</experiments>
</comment>
<comment type="interaction">
    <interactant intactId="EBI-17247926">
        <id>Q9NY72</id>
    </interactant>
    <interactant intactId="EBI-10317612">
        <id>Q9P0N8</id>
        <label>MARCHF2</label>
    </interactant>
    <organismsDiffer>false</organismsDiffer>
    <experiments>3</experiments>
</comment>
<comment type="interaction">
    <interactant intactId="EBI-17247926">
        <id>Q9NY72</id>
    </interactant>
    <interactant intactId="EBI-3920969">
        <id>Q6N075</id>
        <label>MFSD5</label>
    </interactant>
    <organismsDiffer>false</organismsDiffer>
    <experiments>3</experiments>
</comment>
<comment type="interaction">
    <interactant intactId="EBI-17247926">
        <id>Q9NY72</id>
    </interactant>
    <interactant intactId="EBI-724754">
        <id>O14880</id>
        <label>MGST3</label>
    </interactant>
    <organismsDiffer>false</organismsDiffer>
    <experiments>3</experiments>
</comment>
<comment type="interaction">
    <interactant intactId="EBI-17247926">
        <id>Q9NY72</id>
    </interactant>
    <interactant intactId="EBI-12070086">
        <id>Q5J8X5</id>
        <label>MS4A13</label>
    </interactant>
    <organismsDiffer>false</organismsDiffer>
    <experiments>3</experiments>
</comment>
<comment type="interaction">
    <interactant intactId="EBI-17247926">
        <id>Q9NY72</id>
    </interactant>
    <interactant intactId="EBI-10317425">
        <id>Q9NZG7</id>
        <label>NINJ2</label>
    </interactant>
    <organismsDiffer>false</organismsDiffer>
    <experiments>3</experiments>
</comment>
<comment type="interaction">
    <interactant intactId="EBI-17247926">
        <id>Q9NY72</id>
    </interactant>
    <interactant intactId="EBI-1054848">
        <id>Q9P0S3</id>
        <label>ORMDL1</label>
    </interactant>
    <organismsDiffer>false</organismsDiffer>
    <experiments>3</experiments>
</comment>
<comment type="interaction">
    <interactant intactId="EBI-17247926">
        <id>Q9NY72</id>
    </interactant>
    <interactant intactId="EBI-11075081">
        <id>Q53FV1</id>
        <label>ORMDL2</label>
    </interactant>
    <organismsDiffer>false</organismsDiffer>
    <experiments>3</experiments>
</comment>
<comment type="interaction">
    <interactant intactId="EBI-17247926">
        <id>Q9NY72</id>
    </interactant>
    <interactant intactId="EBI-10968883">
        <id>Q8NHP8</id>
        <label>PLBD2</label>
    </interactant>
    <organismsDiffer>false</organismsDiffer>
    <experiments>3</experiments>
</comment>
<comment type="interaction">
    <interactant intactId="EBI-17247926">
        <id>Q9NY72</id>
    </interactant>
    <interactant intactId="EBI-608347">
        <id>Q04941</id>
        <label>PLP2</label>
    </interactant>
    <organismsDiffer>false</organismsDiffer>
    <experiments>3</experiments>
</comment>
<comment type="interaction">
    <interactant intactId="EBI-17247926">
        <id>Q9NY72</id>
    </interactant>
    <interactant intactId="EBI-12955265">
        <id>Q96GM1</id>
        <label>PLPPR2</label>
    </interactant>
    <organismsDiffer>false</organismsDiffer>
    <experiments>3</experiments>
</comment>
<comment type="interaction">
    <interactant intactId="EBI-17247926">
        <id>Q9NY72</id>
    </interactant>
    <interactant intactId="EBI-2845982">
        <id>Q01453</id>
        <label>PMP22</label>
    </interactant>
    <organismsDiffer>false</organismsDiffer>
    <experiments>3</experiments>
</comment>
<comment type="interaction">
    <interactant intactId="EBI-17247926">
        <id>Q9NY72</id>
    </interactant>
    <interactant intactId="EBI-17249212">
        <id>Q02161-2</id>
        <label>RHD</label>
    </interactant>
    <organismsDiffer>false</organismsDiffer>
    <experiments>3</experiments>
</comment>
<comment type="interaction">
    <interactant intactId="EBI-17247926">
        <id>Q9NY72</id>
    </interactant>
    <interactant intactId="EBI-373337">
        <id>O76064</id>
        <label>RNF8</label>
    </interactant>
    <organismsDiffer>false</organismsDiffer>
    <experiments>3</experiments>
</comment>
<comment type="interaction">
    <interactant intactId="EBI-17247926">
        <id>Q9NY72</id>
    </interactant>
    <interactant intactId="EBI-8636004">
        <id>Q96GQ5</id>
        <label>RUSF1</label>
    </interactant>
    <organismsDiffer>false</organismsDiffer>
    <experiments>3</experiments>
</comment>
<comment type="interaction">
    <interactant intactId="EBI-17247926">
        <id>Q9NY72</id>
    </interactant>
    <interactant intactId="EBI-3917235">
        <id>Q9NTJ5</id>
        <label>SACM1L</label>
    </interactant>
    <organismsDiffer>false</organismsDiffer>
    <experiments>3</experiments>
</comment>
<comment type="interaction">
    <interactant intactId="EBI-17247926">
        <id>Q9NY72</id>
    </interactant>
    <interactant intactId="EBI-2684237">
        <id>O00767</id>
        <label>SCD</label>
    </interactant>
    <organismsDiffer>false</organismsDiffer>
    <experiments>3</experiments>
</comment>
<comment type="interaction">
    <interactant intactId="EBI-17247926">
        <id>Q9NY72</id>
    </interactant>
    <interactant intactId="EBI-44443060">
        <id>Q01118</id>
        <label>SCN7A</label>
    </interactant>
    <organismsDiffer>false</organismsDiffer>
    <experiments>3</experiments>
</comment>
<comment type="interaction">
    <interactant intactId="EBI-17247926">
        <id>Q9NY72</id>
    </interactant>
    <interactant intactId="EBI-8652744">
        <id>Q96IW7</id>
        <label>SEC22A</label>
    </interactant>
    <organismsDiffer>false</organismsDiffer>
    <experiments>3</experiments>
</comment>
<comment type="interaction">
    <interactant intactId="EBI-17247926">
        <id>Q9NY72</id>
    </interactant>
    <interactant intactId="EBI-749270">
        <id>Q8N6R1</id>
        <label>SERP2</label>
    </interactant>
    <organismsDiffer>false</organismsDiffer>
    <experiments>3</experiments>
</comment>
<comment type="interaction">
    <interactant intactId="EBI-17247926">
        <id>Q9NY72</id>
    </interactant>
    <interactant intactId="EBI-2854842">
        <id>Q8WV19</id>
        <label>SFT2D1</label>
    </interactant>
    <organismsDiffer>false</organismsDiffer>
    <experiments>3</experiments>
</comment>
<comment type="interaction">
    <interactant intactId="EBI-17247926">
        <id>Q9NY72</id>
    </interactant>
    <interactant intactId="EBI-355861">
        <id>Q9H9B4</id>
        <label>SFXN1</label>
    </interactant>
    <organismsDiffer>false</organismsDiffer>
    <experiments>3</experiments>
</comment>
<comment type="interaction">
    <interactant intactId="EBI-17247926">
        <id>Q9NY72</id>
    </interactant>
    <interactant intactId="EBI-1171999">
        <id>Q9BWM7</id>
        <label>SFXN3</label>
    </interactant>
    <organismsDiffer>false</organismsDiffer>
    <experiments>5</experiments>
</comment>
<comment type="interaction">
    <interactant intactId="EBI-17247926">
        <id>Q9NY72</id>
    </interactant>
    <interactant intactId="EBI-2825135">
        <id>P22732</id>
        <label>SLC2A5</label>
    </interactant>
    <organismsDiffer>false</organismsDiffer>
    <experiments>3</experiments>
</comment>
<comment type="interaction">
    <interactant intactId="EBI-17247926">
        <id>Q9NY72</id>
    </interactant>
    <interactant intactId="EBI-10294651">
        <id>Q99726</id>
        <label>SLC30A3</label>
    </interactant>
    <organismsDiffer>false</organismsDiffer>
    <experiments>3</experiments>
</comment>
<comment type="interaction">
    <interactant intactId="EBI-17247926">
        <id>Q9NY72</id>
    </interactant>
    <interactant intactId="EBI-10262251">
        <id>Q8IWU4</id>
        <label>SLC30A8</label>
    </interactant>
    <organismsDiffer>false</organismsDiffer>
    <experiments>3</experiments>
</comment>
<comment type="interaction">
    <interactant intactId="EBI-17247926">
        <id>Q9NY72</id>
    </interactant>
    <interactant intactId="EBI-12363689">
        <id>Q96G79</id>
        <label>SLC35A4</label>
    </interactant>
    <organismsDiffer>false</organismsDiffer>
    <experiments>3</experiments>
</comment>
<comment type="interaction">
    <interactant intactId="EBI-17247926">
        <id>Q9NY72</id>
    </interactant>
    <interactant intactId="EBI-12867720">
        <id>Q6ICL7</id>
        <label>SLC35E4</label>
    </interactant>
    <organismsDiffer>false</organismsDiffer>
    <experiments>3</experiments>
</comment>
<comment type="interaction">
    <interactant intactId="EBI-17247926">
        <id>Q9NY72</id>
    </interactant>
    <interactant intactId="EBI-9978441">
        <id>Q9H2H9</id>
        <label>SLC38A1</label>
    </interactant>
    <organismsDiffer>false</organismsDiffer>
    <experiments>3</experiments>
</comment>
<comment type="interaction">
    <interactant intactId="EBI-17247926">
        <id>Q9NY72</id>
    </interactant>
    <interactant intactId="EBI-10314552">
        <id>Q9NVC3</id>
        <label>SLC38A7</label>
    </interactant>
    <organismsDiffer>false</organismsDiffer>
    <experiments>3</experiments>
</comment>
<comment type="interaction">
    <interactant intactId="EBI-17247926">
        <id>Q9NY72</id>
    </interactant>
    <interactant intactId="EBI-4289564">
        <id>P30825</id>
        <label>SLC7A1</label>
    </interactant>
    <organismsDiffer>false</organismsDiffer>
    <experiments>3</experiments>
</comment>
<comment type="interaction">
    <interactant intactId="EBI-17247926">
        <id>Q9NY72</id>
    </interactant>
    <interactant intactId="EBI-8640191">
        <id>Q9NRQ5</id>
        <label>SMCO4</label>
    </interactant>
    <organismsDiffer>false</organismsDiffer>
    <experiments>3</experiments>
</comment>
<comment type="interaction">
    <interactant intactId="EBI-17247926">
        <id>Q9NY72</id>
    </interactant>
    <interactant intactId="EBI-12188413">
        <id>B2RUZ4</id>
        <label>SMIM1</label>
    </interactant>
    <organismsDiffer>false</organismsDiffer>
    <experiments>3</experiments>
</comment>
<comment type="interaction">
    <interactant intactId="EBI-17247926">
        <id>Q9NY72</id>
    </interactant>
    <interactant intactId="EBI-12200293">
        <id>P0DN84</id>
        <label>STRIT1</label>
    </interactant>
    <organismsDiffer>false</organismsDiffer>
    <experiments>3</experiments>
</comment>
<comment type="interaction">
    <interactant intactId="EBI-17247926">
        <id>Q9NY72</id>
    </interactant>
    <interactant intactId="EBI-1394295">
        <id>Q13277</id>
        <label>STX3</label>
    </interactant>
    <organismsDiffer>false</organismsDiffer>
    <experiments>3</experiments>
</comment>
<comment type="interaction">
    <interactant intactId="EBI-17247926">
        <id>Q9NY72</id>
    </interactant>
    <interactant intactId="EBI-2695795">
        <id>O43752</id>
        <label>STX6</label>
    </interactant>
    <organismsDiffer>false</organismsDiffer>
    <experiments>3</experiments>
</comment>
<comment type="interaction">
    <interactant intactId="EBI-17247926">
        <id>Q9NY72</id>
    </interactant>
    <interactant intactId="EBI-727240">
        <id>Q9UNK0</id>
        <label>STX8</label>
    </interactant>
    <organismsDiffer>false</organismsDiffer>
    <experiments>3</experiments>
</comment>
<comment type="interaction">
    <interactant intactId="EBI-17247926">
        <id>Q9NY72</id>
    </interactant>
    <interactant intactId="EBI-310962">
        <id>Q9UPZ6</id>
        <label>THSD7A</label>
    </interactant>
    <organismsDiffer>false</organismsDiffer>
    <experiments>3</experiments>
</comment>
<comment type="interaction">
    <interactant intactId="EBI-17247926">
        <id>Q9NY72</id>
    </interactant>
    <interactant intactId="EBI-1047996">
        <id>O14925</id>
        <label>TIMM23</label>
    </interactant>
    <organismsDiffer>false</organismsDiffer>
    <experiments>3</experiments>
</comment>
<comment type="interaction">
    <interactant intactId="EBI-17247926">
        <id>Q9NY72</id>
    </interactant>
    <interactant intactId="EBI-13082040">
        <id>Q9BZW4</id>
        <label>TM6SF2</label>
    </interactant>
    <organismsDiffer>false</organismsDiffer>
    <experiments>3</experiments>
</comment>
<comment type="interaction">
    <interactant intactId="EBI-17247926">
        <id>Q9NY72</id>
    </interactant>
    <interactant intactId="EBI-1045825">
        <id>P55061</id>
        <label>TMBIM6</label>
    </interactant>
    <organismsDiffer>false</organismsDiffer>
    <experiments>3</experiments>
</comment>
<comment type="interaction">
    <interactant intactId="EBI-17247926">
        <id>Q9NY72</id>
    </interactant>
    <interactant intactId="EBI-727322">
        <id>Q9BXJ8</id>
        <label>TMEM120A</label>
    </interactant>
    <organismsDiffer>false</organismsDiffer>
    <experiments>3</experiments>
</comment>
<comment type="interaction">
    <interactant intactId="EBI-17247926">
        <id>Q9NY72</id>
    </interactant>
    <interactant intactId="EBI-10171534">
        <id>A0PK00</id>
        <label>TMEM120B</label>
    </interactant>
    <organismsDiffer>false</organismsDiffer>
    <experiments>3</experiments>
</comment>
<comment type="interaction">
    <interactant intactId="EBI-17247926">
        <id>Q9NY72</id>
    </interactant>
    <interactant intactId="EBI-10694905">
        <id>Q5BJH2-2</id>
        <label>TMEM128</label>
    </interactant>
    <organismsDiffer>false</organismsDiffer>
    <experiments>3</experiments>
</comment>
<comment type="interaction">
    <interactant intactId="EBI-17247926">
        <id>Q9NY72</id>
    </interactant>
    <interactant intactId="EBI-2844246">
        <id>Q9NV12</id>
        <label>TMEM140</label>
    </interactant>
    <organismsDiffer>false</organismsDiffer>
    <experiments>3</experiments>
</comment>
<comment type="interaction">
    <interactant intactId="EBI-17247926">
        <id>Q9NY72</id>
    </interactant>
    <interactant intactId="EBI-2800360">
        <id>Q9Y6G1</id>
        <label>TMEM14A</label>
    </interactant>
    <organismsDiffer>false</organismsDiffer>
    <experiments>3</experiments>
</comment>
<comment type="interaction">
    <interactant intactId="EBI-17247926">
        <id>Q9NY72</id>
    </interactant>
    <interactant intactId="EBI-8638294">
        <id>Q9NUH8</id>
        <label>TMEM14B</label>
    </interactant>
    <organismsDiffer>false</organismsDiffer>
    <experiments>3</experiments>
</comment>
<comment type="interaction">
    <interactant intactId="EBI-17247926">
        <id>Q9NY72</id>
    </interactant>
    <interactant intactId="EBI-12876824">
        <id>Q9BTX3</id>
        <label>TMEM208</label>
    </interactant>
    <organismsDiffer>false</organismsDiffer>
    <experiments>3</experiments>
</comment>
<comment type="interaction">
    <interactant intactId="EBI-17247926">
        <id>Q9NY72</id>
    </interactant>
    <interactant intactId="EBI-11528917">
        <id>Q8WW34-2</id>
        <label>TMEM239</label>
    </interactant>
    <organismsDiffer>false</organismsDiffer>
    <experiments>3</experiments>
</comment>
<comment type="interaction">
    <interactant intactId="EBI-17247926">
        <id>Q9NY72</id>
    </interactant>
    <interactant intactId="EBI-12887458">
        <id>Q9BU79</id>
        <label>TMEM243</label>
    </interactant>
    <organismsDiffer>false</organismsDiffer>
    <experiments>3</experiments>
</comment>
<comment type="interaction">
    <interactant intactId="EBI-17247926">
        <id>Q9NY72</id>
    </interactant>
    <interactant intactId="EBI-12038591">
        <id>Q69YG0</id>
        <label>TMEM42</label>
    </interactant>
    <organismsDiffer>false</organismsDiffer>
    <experiments>3</experiments>
</comment>
<comment type="interaction">
    <interactant intactId="EBI-17247926">
        <id>Q9NY72</id>
    </interactant>
    <interactant intactId="EBI-12366453">
        <id>P56557</id>
        <label>TMEM50B</label>
    </interactant>
    <organismsDiffer>false</organismsDiffer>
    <experiments>3</experiments>
</comment>
<comment type="interaction">
    <interactant intactId="EBI-17247926">
        <id>Q9NY72</id>
    </interactant>
    <interactant intactId="EBI-2852148">
        <id>Q9H2L4</id>
        <label>TMEM60</label>
    </interactant>
    <organismsDiffer>false</organismsDiffer>
    <experiments>3</experiments>
</comment>
<comment type="interaction">
    <interactant intactId="EBI-17247926">
        <id>Q9NY72</id>
    </interactant>
    <interactant intactId="EBI-6656213">
        <id>Q6PI78</id>
        <label>TMEM65</label>
    </interactant>
    <organismsDiffer>false</organismsDiffer>
    <experiments>3</experiments>
</comment>
<comment type="interaction">
    <interactant intactId="EBI-17247926">
        <id>Q9NY72</id>
    </interactant>
    <interactant intactId="EBI-12015604">
        <id>Q8N2M4</id>
        <label>TMEM86A</label>
    </interactant>
    <organismsDiffer>false</organismsDiffer>
    <experiments>3</experiments>
</comment>
<comment type="interaction">
    <interactant intactId="EBI-17247926">
        <id>Q9NY72</id>
    </interactant>
    <interactant intactId="EBI-11724433">
        <id>Q6ZT21</id>
        <label>TMPPE</label>
    </interactant>
    <organismsDiffer>false</organismsDiffer>
    <experiments>3</experiments>
</comment>
<comment type="interaction">
    <interactant intactId="EBI-17247926">
        <id>Q9NY72</id>
    </interactant>
    <interactant intactId="EBI-17249488">
        <id>Q6ZUI0</id>
        <label>TPRG1</label>
    </interactant>
    <organismsDiffer>false</organismsDiffer>
    <experiments>3</experiments>
</comment>
<comment type="interaction">
    <interactant intactId="EBI-17247926">
        <id>Q9NY72</id>
    </interactant>
    <interactant intactId="EBI-3914288">
        <id>O60636</id>
        <label>TSPAN2</label>
    </interactant>
    <organismsDiffer>false</organismsDiffer>
    <experiments>3</experiments>
</comment>
<comment type="interaction">
    <interactant intactId="EBI-17247926">
        <id>Q9NY72</id>
    </interactant>
    <interactant intactId="EBI-11988865">
        <id>A5PKU2</id>
        <label>TUSC5</label>
    </interactant>
    <organismsDiffer>false</organismsDiffer>
    <experiments>3</experiments>
</comment>
<comment type="interaction">
    <interactant intactId="EBI-17247926">
        <id>Q9NY72</id>
    </interactant>
    <interactant intactId="EBI-11343401">
        <id>Q9NYZ1</id>
        <label>TVP23B</label>
    </interactant>
    <organismsDiffer>false</organismsDiffer>
    <experiments>3</experiments>
</comment>
<comment type="interaction">
    <interactant intactId="EBI-17247926">
        <id>Q9NY72</id>
    </interactant>
    <interactant intactId="EBI-2819725">
        <id>Q9Y5Z9</id>
        <label>UBIAD1</label>
    </interactant>
    <organismsDiffer>false</organismsDiffer>
    <experiments>3</experiments>
</comment>
<comment type="interaction">
    <interactant intactId="EBI-17247926">
        <id>Q9NY72</id>
    </interactant>
    <interactant intactId="EBI-742842">
        <id>Q9NZ43</id>
        <label>USE1</label>
    </interactant>
    <organismsDiffer>false</organismsDiffer>
    <experiments>3</experiments>
</comment>
<comment type="interaction">
    <interactant intactId="EBI-17247926">
        <id>Q9NY72</id>
    </interactant>
    <interactant intactId="EBI-12097582">
        <id>P23763-3</id>
        <label>VAMP1</label>
    </interactant>
    <organismsDiffer>false</organismsDiffer>
    <experiments>3</experiments>
</comment>
<comment type="interaction">
    <interactant intactId="EBI-17247926">
        <id>Q9NY72</id>
    </interactant>
    <interactant intactId="EBI-520113">
        <id>P63027</id>
        <label>VAMP2</label>
    </interactant>
    <organismsDiffer>false</organismsDiffer>
    <experiments>3</experiments>
</comment>
<comment type="interaction">
    <interactant intactId="EBI-17247926">
        <id>Q9NY72</id>
    </interactant>
    <interactant intactId="EBI-722343">
        <id>Q15836</id>
        <label>VAMP3</label>
    </interactant>
    <organismsDiffer>false</organismsDiffer>
    <experiments>3</experiments>
</comment>
<comment type="interaction">
    <interactant intactId="EBI-17247926">
        <id>Q9NY72</id>
    </interactant>
    <interactant intactId="EBI-1059156">
        <id>Q9P0L0</id>
        <label>VAPA</label>
    </interactant>
    <organismsDiffer>false</organismsDiffer>
    <experiments>3</experiments>
</comment>
<comment type="interaction">
    <interactant intactId="EBI-17247926">
        <id>Q9NY72</id>
    </interactant>
    <interactant intactId="EBI-1188298">
        <id>O95292</id>
        <label>VAPB</label>
    </interactant>
    <organismsDiffer>false</organismsDiffer>
    <experiments>3</experiments>
</comment>
<comment type="interaction">
    <interactant intactId="EBI-17247926">
        <id>Q9NY72</id>
    </interactant>
    <interactant intactId="EBI-2799703">
        <id>O95070</id>
        <label>YIF1A</label>
    </interactant>
    <organismsDiffer>false</organismsDiffer>
    <experiments>3</experiments>
</comment>
<comment type="interaction">
    <interactant intactId="EBI-17247926">
        <id>Q9NY72</id>
    </interactant>
    <interactant intactId="EBI-751253">
        <id>Q9BSR8</id>
        <label>YIPF4</label>
    </interactant>
    <organismsDiffer>false</organismsDiffer>
    <experiments>3</experiments>
</comment>
<comment type="interaction">
    <interactant intactId="EBI-17247926">
        <id>Q9NY72</id>
    </interactant>
    <interactant intactId="EBI-718439">
        <id>O95159</id>
        <label>ZFPL1</label>
    </interactant>
    <organismsDiffer>false</organismsDiffer>
    <experiments>3</experiments>
</comment>
<comment type="subcellular location">
    <subcellularLocation>
        <location evidence="10">Cell membrane</location>
        <topology evidence="14">Single-pass type I membrane protein</topology>
    </subcellularLocation>
</comment>
<comment type="tissue specificity">
    <text evidence="9">Expressed in the atrium.</text>
</comment>
<comment type="PTM">
    <text evidence="10">Intramolecular disulfide bonds favor the voltage-gated sodium channel oligomeric complex assembly.</text>
</comment>
<comment type="PTM">
    <text evidence="10">N-glycosylated.</text>
</comment>
<comment type="disease" evidence="6">
    <disease id="DI-02503">
        <name>Brugada syndrome 7</name>
        <acronym>BRGDA7</acronym>
        <description>A tachyarrhythmia characterized by right bundle branch block and ST segment elevation on an electrocardiogram (ECG). It can cause the ventricles to beat so fast that the blood is prevented from circulating efficiently in the body. When this situation occurs, the individual will faint and may die in a few minutes if the heart is not reset.</description>
        <dbReference type="MIM" id="613120"/>
    </disease>
    <text>The gene represented in this entry may be involved in disease pathogenesis.</text>
</comment>
<comment type="disease" evidence="8 9">
    <disease id="DI-04165">
        <name>Atrial fibrillation, familial, 16</name>
        <acronym>ATFB16</acronym>
        <description>A familial form of atrial fibrillation, a common sustained cardiac rhythm disturbance. Atrial fibrillation is characterized by disorganized atrial electrical activity and ineffective atrial contraction promoting blood stasis in the atria and reduces ventricular filling. It can result in palpitations, syncope, thromboembolic stroke, and congestive heart failure.</description>
        <dbReference type="MIM" id="613120"/>
    </disease>
    <text>The disease is caused by variants affecting the gene represented in this entry.</text>
</comment>
<comment type="similarity">
    <text evidence="13">Belongs to the sodium channel auxiliary subunit SCN3B (TC 8.A.17) family.</text>
</comment>
<comment type="sequence caution" evidence="13">
    <conflict type="erroneous initiation">
        <sequence resource="EMBL-CDS" id="BAA86472"/>
    </conflict>
</comment>
<reference key="1">
    <citation type="journal article" date="2000" name="Proc. Natl. Acad. Sci. U.S.A.">
        <title>Beta3: an additional auxiliary subunit of the voltage-sensitive sodium channel that modulates channel gating with distinct kinetics.</title>
        <authorList>
            <person name="Morgan K."/>
            <person name="Stevens E.B."/>
            <person name="Shaw B."/>
            <person name="Cox P."/>
            <person name="Dixon A.K."/>
            <person name="Lee K."/>
            <person name="Pinnock R.D."/>
            <person name="Highes J."/>
            <person name="Richardson P.J."/>
            <person name="Mizuguchi K."/>
            <person name="Jackson A.P."/>
        </authorList>
    </citation>
    <scope>NUCLEOTIDE SEQUENCE [MRNA]</scope>
    <source>
        <tissue>Brain</tissue>
    </source>
</reference>
<reference key="2">
    <citation type="journal article" date="2001" name="Genome Res.">
        <title>Towards a catalog of human genes and proteins: sequencing and analysis of 500 novel complete protein coding human cDNAs.</title>
        <authorList>
            <person name="Wiemann S."/>
            <person name="Weil B."/>
            <person name="Wellenreuther R."/>
            <person name="Gassenhuber J."/>
            <person name="Glassl S."/>
            <person name="Ansorge W."/>
            <person name="Boecher M."/>
            <person name="Bloecker H."/>
            <person name="Bauersachs S."/>
            <person name="Blum H."/>
            <person name="Lauber J."/>
            <person name="Duesterhoeft A."/>
            <person name="Beyer A."/>
            <person name="Koehrer K."/>
            <person name="Strack N."/>
            <person name="Mewes H.-W."/>
            <person name="Ottenwaelder B."/>
            <person name="Obermaier B."/>
            <person name="Tampe J."/>
            <person name="Heubner D."/>
            <person name="Wambutt R."/>
            <person name="Korn B."/>
            <person name="Klein M."/>
            <person name="Poustka A."/>
        </authorList>
    </citation>
    <scope>NUCLEOTIDE SEQUENCE [LARGE SCALE MRNA]</scope>
    <source>
        <tissue>Amygdala</tissue>
    </source>
</reference>
<reference key="3">
    <citation type="journal article" date="1999" name="DNA Res.">
        <title>Characterization of cDNA clones selected by the GeneMark analysis from size-fractionated cDNA libraries from human brain.</title>
        <authorList>
            <person name="Hirosawa M."/>
            <person name="Nagase T."/>
            <person name="Ishikawa K."/>
            <person name="Kikuno R."/>
            <person name="Nomura N."/>
            <person name="Ohara O."/>
        </authorList>
    </citation>
    <scope>NUCLEOTIDE SEQUENCE [LARGE SCALE MRNA]</scope>
    <source>
        <tissue>Brain</tissue>
    </source>
</reference>
<reference key="4">
    <citation type="journal article" date="2004" name="Nat. Genet.">
        <title>Complete sequencing and characterization of 21,243 full-length human cDNAs.</title>
        <authorList>
            <person name="Ota T."/>
            <person name="Suzuki Y."/>
            <person name="Nishikawa T."/>
            <person name="Otsuki T."/>
            <person name="Sugiyama T."/>
            <person name="Irie R."/>
            <person name="Wakamatsu A."/>
            <person name="Hayashi K."/>
            <person name="Sato H."/>
            <person name="Nagai K."/>
            <person name="Kimura K."/>
            <person name="Makita H."/>
            <person name="Sekine M."/>
            <person name="Obayashi M."/>
            <person name="Nishi T."/>
            <person name="Shibahara T."/>
            <person name="Tanaka T."/>
            <person name="Ishii S."/>
            <person name="Yamamoto J."/>
            <person name="Saito K."/>
            <person name="Kawai Y."/>
            <person name="Isono Y."/>
            <person name="Nakamura Y."/>
            <person name="Nagahari K."/>
            <person name="Murakami K."/>
            <person name="Yasuda T."/>
            <person name="Iwayanagi T."/>
            <person name="Wagatsuma M."/>
            <person name="Shiratori A."/>
            <person name="Sudo H."/>
            <person name="Hosoiri T."/>
            <person name="Kaku Y."/>
            <person name="Kodaira H."/>
            <person name="Kondo H."/>
            <person name="Sugawara M."/>
            <person name="Takahashi M."/>
            <person name="Kanda K."/>
            <person name="Yokoi T."/>
            <person name="Furuya T."/>
            <person name="Kikkawa E."/>
            <person name="Omura Y."/>
            <person name="Abe K."/>
            <person name="Kamihara K."/>
            <person name="Katsuta N."/>
            <person name="Sato K."/>
            <person name="Tanikawa M."/>
            <person name="Yamazaki M."/>
            <person name="Ninomiya K."/>
            <person name="Ishibashi T."/>
            <person name="Yamashita H."/>
            <person name="Murakawa K."/>
            <person name="Fujimori K."/>
            <person name="Tanai H."/>
            <person name="Kimata M."/>
            <person name="Watanabe M."/>
            <person name="Hiraoka S."/>
            <person name="Chiba Y."/>
            <person name="Ishida S."/>
            <person name="Ono Y."/>
            <person name="Takiguchi S."/>
            <person name="Watanabe S."/>
            <person name="Yosida M."/>
            <person name="Hotuta T."/>
            <person name="Kusano J."/>
            <person name="Kanehori K."/>
            <person name="Takahashi-Fujii A."/>
            <person name="Hara H."/>
            <person name="Tanase T.-O."/>
            <person name="Nomura Y."/>
            <person name="Togiya S."/>
            <person name="Komai F."/>
            <person name="Hara R."/>
            <person name="Takeuchi K."/>
            <person name="Arita M."/>
            <person name="Imose N."/>
            <person name="Musashino K."/>
            <person name="Yuuki H."/>
            <person name="Oshima A."/>
            <person name="Sasaki N."/>
            <person name="Aotsuka S."/>
            <person name="Yoshikawa Y."/>
            <person name="Matsunawa H."/>
            <person name="Ichihara T."/>
            <person name="Shiohata N."/>
            <person name="Sano S."/>
            <person name="Moriya S."/>
            <person name="Momiyama H."/>
            <person name="Satoh N."/>
            <person name="Takami S."/>
            <person name="Terashima Y."/>
            <person name="Suzuki O."/>
            <person name="Nakagawa S."/>
            <person name="Senoh A."/>
            <person name="Mizoguchi H."/>
            <person name="Goto Y."/>
            <person name="Shimizu F."/>
            <person name="Wakebe H."/>
            <person name="Hishigaki H."/>
            <person name="Watanabe T."/>
            <person name="Sugiyama A."/>
            <person name="Takemoto M."/>
            <person name="Kawakami B."/>
            <person name="Yamazaki M."/>
            <person name="Watanabe K."/>
            <person name="Kumagai A."/>
            <person name="Itakura S."/>
            <person name="Fukuzumi Y."/>
            <person name="Fujimori Y."/>
            <person name="Komiyama M."/>
            <person name="Tashiro H."/>
            <person name="Tanigami A."/>
            <person name="Fujiwara T."/>
            <person name="Ono T."/>
            <person name="Yamada K."/>
            <person name="Fujii Y."/>
            <person name="Ozaki K."/>
            <person name="Hirao M."/>
            <person name="Ohmori Y."/>
            <person name="Kawabata A."/>
            <person name="Hikiji T."/>
            <person name="Kobatake N."/>
            <person name="Inagaki H."/>
            <person name="Ikema Y."/>
            <person name="Okamoto S."/>
            <person name="Okitani R."/>
            <person name="Kawakami T."/>
            <person name="Noguchi S."/>
            <person name="Itoh T."/>
            <person name="Shigeta K."/>
            <person name="Senba T."/>
            <person name="Matsumura K."/>
            <person name="Nakajima Y."/>
            <person name="Mizuno T."/>
            <person name="Morinaga M."/>
            <person name="Sasaki M."/>
            <person name="Togashi T."/>
            <person name="Oyama M."/>
            <person name="Hata H."/>
            <person name="Watanabe M."/>
            <person name="Komatsu T."/>
            <person name="Mizushima-Sugano J."/>
            <person name="Satoh T."/>
            <person name="Shirai Y."/>
            <person name="Takahashi Y."/>
            <person name="Nakagawa K."/>
            <person name="Okumura K."/>
            <person name="Nagase T."/>
            <person name="Nomura N."/>
            <person name="Kikuchi H."/>
            <person name="Masuho Y."/>
            <person name="Yamashita R."/>
            <person name="Nakai K."/>
            <person name="Yada T."/>
            <person name="Nakamura Y."/>
            <person name="Ohara O."/>
            <person name="Isogai T."/>
            <person name="Sugano S."/>
        </authorList>
    </citation>
    <scope>NUCLEOTIDE SEQUENCE [LARGE SCALE MRNA]</scope>
    <source>
        <tissue>Brain</tissue>
    </source>
</reference>
<reference key="5">
    <citation type="submission" date="2006-06" db="EMBL/GenBank/DDBJ databases">
        <authorList>
            <consortium name="NHLBI resequencing and genotyping service (RS&amp;G)"/>
        </authorList>
    </citation>
    <scope>NUCLEOTIDE SEQUENCE [GENOMIC DNA]</scope>
</reference>
<reference key="6">
    <citation type="journal article" date="2004" name="Genome Res.">
        <title>The status, quality, and expansion of the NIH full-length cDNA project: the Mammalian Gene Collection (MGC).</title>
        <authorList>
            <consortium name="The MGC Project Team"/>
        </authorList>
    </citation>
    <scope>NUCLEOTIDE SEQUENCE [LARGE SCALE MRNA]</scope>
    <source>
        <tissue>Brain</tissue>
    </source>
</reference>
<reference key="7">
    <citation type="journal article" date="2004" name="Neuropharmacology">
        <title>Heterologous expression and functional analysis of rat Nav1.8 (SNS) voltage-gated sodium channels in the dorsal root ganglion neuroblastoma cell line ND7-23.</title>
        <authorList>
            <person name="John V.H."/>
            <person name="Main M.J."/>
            <person name="Powell A.J."/>
            <person name="Gladwell Z.M."/>
            <person name="Hick C."/>
            <person name="Sidhu H.S."/>
            <person name="Clare J.J."/>
            <person name="Tate S."/>
            <person name="Trezise D.J."/>
        </authorList>
    </citation>
    <scope>FUNCTION</scope>
</reference>
<reference key="8">
    <citation type="journal article" date="2020" name="FASEB J.">
        <title>Supramolecular clustering of the cardiac sodium channel Nav1.5 in HEK293F cells, with and without the auxiliary beta3-subunit.</title>
        <authorList>
            <person name="Salvage S.C."/>
            <person name="Rees J.S."/>
            <person name="McStea A."/>
            <person name="Hirsch M."/>
            <person name="Wang L."/>
            <person name="Tynan C.J."/>
            <person name="Reed M.W."/>
            <person name="Irons J.R."/>
            <person name="Butler R."/>
            <person name="Thompson A.J."/>
            <person name="Martin-Fernandez M.L."/>
            <person name="Huang C.L."/>
            <person name="Jackson A.P."/>
        </authorList>
    </citation>
    <scope>FUNCTION</scope>
</reference>
<reference evidence="16" key="9">
    <citation type="journal article" date="2014" name="J. Biol. Chem.">
        <title>Crystal structure and molecular imaging of the Nav channel beta3 subunit indicates a trimeric assembly.</title>
        <authorList>
            <person name="Namadurai S."/>
            <person name="Balasuriya D."/>
            <person name="Rajappa R."/>
            <person name="Wiemhoefer M."/>
            <person name="Stott K."/>
            <person name="Klingauf J."/>
            <person name="Edwardson J.M."/>
            <person name="Chirgadze D.Y."/>
            <person name="Jackson A.P."/>
        </authorList>
    </citation>
    <scope>X-RAY CRYSTALLOGRAPHY (2.50 ANGSTROMS) OF 25-145</scope>
    <scope>SUBUNIT</scope>
    <scope>INTERACTION WITH SCN5A</scope>
    <scope>SUBCELLULAR LOCATION</scope>
    <scope>DISULFIDE BONDS</scope>
    <scope>GLYCOSYLATION</scope>
    <scope>MUTAGENESIS OF CYS-48</scope>
</reference>
<reference evidence="17 18" key="10">
    <citation type="journal article" date="2022" name="Nat. Commun.">
        <title>Structure-guided unlocking of NaX reveals a non-selective tetrodotoxin-sensitive cation channel.</title>
        <authorList>
            <person name="Noland C.L."/>
            <person name="Chua H.C."/>
            <person name="Kschonsak M."/>
            <person name="Heusser S.A."/>
            <person name="Braun N."/>
            <person name="Chang T."/>
            <person name="Tam C."/>
            <person name="Tang J."/>
            <person name="Arthur C.P."/>
            <person name="Ciferri C."/>
            <person name="Pless S.A."/>
            <person name="Payandeh J."/>
        </authorList>
    </citation>
    <scope>STRUCTURE BY ELECTRON MICROSCOPY (2.90 ANGSTROMS) IN COMPLEX WIRH SCN7A</scope>
    <scope>FUNCTION</scope>
    <scope>SUBUNIT</scope>
    <scope>TOPOLOGY</scope>
    <scope>DISULFIDE BONDS</scope>
</reference>
<reference key="11">
    <citation type="journal article" date="2006" name="Science">
        <title>The consensus coding sequences of human breast and colorectal cancers.</title>
        <authorList>
            <person name="Sjoeblom T."/>
            <person name="Jones S."/>
            <person name="Wood L.D."/>
            <person name="Parsons D.W."/>
            <person name="Lin J."/>
            <person name="Barber T.D."/>
            <person name="Mandelker D."/>
            <person name="Leary R.J."/>
            <person name="Ptak J."/>
            <person name="Silliman N."/>
            <person name="Szabo S."/>
            <person name="Buckhaults P."/>
            <person name="Farrell C."/>
            <person name="Meeh P."/>
            <person name="Markowitz S.D."/>
            <person name="Willis J."/>
            <person name="Dawson D."/>
            <person name="Willson J.K.V."/>
            <person name="Gazdar A.F."/>
            <person name="Hartigan J."/>
            <person name="Wu L."/>
            <person name="Liu C."/>
            <person name="Parmigiani G."/>
            <person name="Park B.H."/>
            <person name="Bachman K.E."/>
            <person name="Papadopoulos N."/>
            <person name="Vogelstein B."/>
            <person name="Kinzler K.W."/>
            <person name="Velculescu V.E."/>
        </authorList>
    </citation>
    <scope>VARIANTS [LARGE SCALE ANALYSIS] LEU-89 AND THR-195</scope>
</reference>
<reference key="12">
    <citation type="journal article" date="2009" name="Circ. Cardiovasc. Genet.">
        <title>A mutation in the beta-3 subunit of the cardiac sodium channel associated with Brugada ECG phenotype.</title>
        <authorList>
            <person name="Hu D."/>
            <person name="Barajas-Martinez H."/>
            <person name="Burashnikov E."/>
            <person name="Springer M."/>
            <person name="Wu Y."/>
            <person name="Varro A."/>
            <person name="Pfeiffer R."/>
            <person name="Koopmann T.T."/>
            <person name="Cordeiro J.M."/>
            <person name="Guerchicoff A."/>
            <person name="Pollevick G.D."/>
            <person name="Antzelevitch C."/>
        </authorList>
    </citation>
    <scope>VARIANT BRGDA7 PRO-10</scope>
</reference>
<reference key="13">
    <citation type="journal article" date="2010" name="Biochem. Biophys. Res. Commun.">
        <title>Functional dominant-negative mutation of sodium channel subunit gene SCN3B associated with atrial fibrillation in a Chinese GeneID population.</title>
        <authorList>
            <person name="Wang P."/>
            <person name="Yang Q."/>
            <person name="Wu X."/>
            <person name="Yang Y."/>
            <person name="Shi L."/>
            <person name="Wang C."/>
            <person name="Wu G."/>
            <person name="Xia Y."/>
            <person name="Yang B."/>
            <person name="Zhang R."/>
            <person name="Xu C."/>
            <person name="Cheng X."/>
            <person name="Li S."/>
            <person name="Zhao Y."/>
            <person name="Fu F."/>
            <person name="Liao Y."/>
            <person name="Fang F."/>
            <person name="Chen Q."/>
            <person name="Tu X."/>
            <person name="Wang Q.K."/>
        </authorList>
    </citation>
    <scope>INVOLVEMENT IN ATFB16</scope>
    <scope>VARIANT ATFB16 VAL-130</scope>
    <scope>CHARACTERIZATION OF VARIANT ATFB16 VAL-130</scope>
    <scope>FUNCTION</scope>
</reference>
<reference key="14">
    <citation type="journal article" date="2010" name="Cardiovasc. Res.">
        <title>Loss-of-function mutation of the SCN3B-encoded sodium channel {beta}3 subunit associated with a case of idiopathic ventricular fibrillation.</title>
        <authorList>
            <person name="Valdivia C.R."/>
            <person name="Medeiros-Domingo A."/>
            <person name="Ye B."/>
            <person name="Shen W.K."/>
            <person name="Algiers T.J."/>
            <person name="Ackerman M.J."/>
            <person name="Makielski J.C."/>
        </authorList>
    </citation>
    <scope>VARIANT GLY-54</scope>
</reference>
<reference key="15">
    <citation type="journal article" date="2011" name="Cardiovasc. Res.">
        <title>Mutations in sodium channel beta-subunit SCN3B are associated with early-onset lone atrial fibrillation.</title>
        <authorList>
            <person name="Olesen M.S."/>
            <person name="Jespersen T."/>
            <person name="Nielsen J.B."/>
            <person name="Liang B."/>
            <person name="Moller D.V."/>
            <person name="Hedley P."/>
            <person name="Christiansen M."/>
            <person name="Varro A."/>
            <person name="Olesen S.P."/>
            <person name="Haunso S."/>
            <person name="Schmitt N."/>
            <person name="Svendsen J.H."/>
        </authorList>
    </citation>
    <scope>VARIANTS ATFB16 LYS-6; PRO-10 AND THR-161</scope>
    <scope>CHARACTERIZATION OF VARIANTS ATFB16 LYS-6; PRO-10 AND THR-161</scope>
    <scope>FUNCTION</scope>
    <scope>TISSUE SPECIFICITY</scope>
</reference>
<protein>
    <recommendedName>
        <fullName evidence="13">Sodium channel regulatory subunit beta-3</fullName>
    </recommendedName>
</protein>
<dbReference type="EMBL" id="AJ243396">
    <property type="protein sequence ID" value="CAB76825.1"/>
    <property type="molecule type" value="mRNA"/>
</dbReference>
<dbReference type="EMBL" id="AL136589">
    <property type="protein sequence ID" value="CAB66524.1"/>
    <property type="molecule type" value="mRNA"/>
</dbReference>
<dbReference type="EMBL" id="AB032984">
    <property type="protein sequence ID" value="BAA86472.1"/>
    <property type="status" value="ALT_INIT"/>
    <property type="molecule type" value="mRNA"/>
</dbReference>
<dbReference type="EMBL" id="AK314513">
    <property type="protein sequence ID" value="BAG37113.1"/>
    <property type="molecule type" value="mRNA"/>
</dbReference>
<dbReference type="EMBL" id="DQ677666">
    <property type="protein sequence ID" value="ABQ01237.1"/>
    <property type="molecule type" value="Genomic_DNA"/>
</dbReference>
<dbReference type="EMBL" id="BC117282">
    <property type="protein sequence ID" value="AAI17283.1"/>
    <property type="molecule type" value="mRNA"/>
</dbReference>
<dbReference type="EMBL" id="BC126265">
    <property type="protein sequence ID" value="AAI26266.1"/>
    <property type="molecule type" value="mRNA"/>
</dbReference>
<dbReference type="CCDS" id="CCDS8442.1"/>
<dbReference type="RefSeq" id="NP_001035241.1">
    <property type="nucleotide sequence ID" value="NM_001040151.2"/>
</dbReference>
<dbReference type="RefSeq" id="NP_060870.1">
    <property type="nucleotide sequence ID" value="NM_018400.4"/>
</dbReference>
<dbReference type="RefSeq" id="XP_011541199.1">
    <property type="nucleotide sequence ID" value="XM_011542897.3"/>
</dbReference>
<dbReference type="RefSeq" id="XP_054225326.1">
    <property type="nucleotide sequence ID" value="XM_054369351.1"/>
</dbReference>
<dbReference type="PDB" id="4L1D">
    <property type="method" value="X-ray"/>
    <property type="resolution" value="2.50 A"/>
    <property type="chains" value="A/B/C=25-145"/>
</dbReference>
<dbReference type="PDB" id="7TJ8">
    <property type="method" value="EM"/>
    <property type="resolution" value="3.20 A"/>
    <property type="chains" value="B=1-215"/>
</dbReference>
<dbReference type="PDB" id="7TJ9">
    <property type="method" value="EM"/>
    <property type="resolution" value="2.90 A"/>
    <property type="chains" value="B=1-215"/>
</dbReference>
<dbReference type="PDBsum" id="4L1D"/>
<dbReference type="PDBsum" id="7TJ8"/>
<dbReference type="PDBsum" id="7TJ9"/>
<dbReference type="EMDB" id="EMD-25919"/>
<dbReference type="EMDB" id="EMD-25920"/>
<dbReference type="SMR" id="Q9NY72"/>
<dbReference type="BioGRID" id="120912">
    <property type="interactions" value="219"/>
</dbReference>
<dbReference type="ComplexPortal" id="CPX-8640">
    <property type="entry name" value="Nav1.1 voltage-gated sodium channel complex, SCN2B-SCN3B variant"/>
</dbReference>
<dbReference type="ComplexPortal" id="CPX-8642">
    <property type="entry name" value="Nav1.1 voltage-gated sodium channel complex, SCN3B-SCN4B variant"/>
</dbReference>
<dbReference type="ComplexPortal" id="CPX-8644">
    <property type="entry name" value="Nav1.2 voltage-gated sodium channel complex, SCN2B-SCN3B variant"/>
</dbReference>
<dbReference type="ComplexPortal" id="CPX-8646">
    <property type="entry name" value="Nav1.2 voltage-gated sodium channel complex, SCN3B-SCN4B variant"/>
</dbReference>
<dbReference type="ComplexPortal" id="CPX-8662">
    <property type="entry name" value="Nav1.3 voltage-gated sodium channel complex, SCN2B-SCN3B variant"/>
</dbReference>
<dbReference type="ComplexPortal" id="CPX-8663">
    <property type="entry name" value="Nav1.3 voltage-gated sodium channel complex, SCN3B-SCN4B variant"/>
</dbReference>
<dbReference type="ComplexPortal" id="CPX-8667">
    <property type="entry name" value="Nav1.4 voltage-gated sodium channel complex, SCN2B-SCN3B variant"/>
</dbReference>
<dbReference type="ComplexPortal" id="CPX-8668">
    <property type="entry name" value="Nav1.4 voltage-gated sodium channel complex, SCN3B-SCN4B variant"/>
</dbReference>
<dbReference type="ComplexPortal" id="CPX-8671">
    <property type="entry name" value="Nav1.5 voltage-gated sodium channel complex, SCN2B-SCN3B variant"/>
</dbReference>
<dbReference type="ComplexPortal" id="CPX-8672">
    <property type="entry name" value="Nav1.5 voltage-gated sodium channel complex, SCN3B-SCN4B variant"/>
</dbReference>
<dbReference type="ComplexPortal" id="CPX-8675">
    <property type="entry name" value="Nav1.6 voltage-gated sodium channel complex, SCN3B-SCN4B variant"/>
</dbReference>
<dbReference type="ComplexPortal" id="CPX-8676">
    <property type="entry name" value="Nav1.6 voltage-gated sodium channel complex, SCN2B-SCN3B variant"/>
</dbReference>
<dbReference type="ComplexPortal" id="CPX-8679">
    <property type="entry name" value="Nav1.7 voltage-gated sodium channel complex, SCN3B-SCN4B variant"/>
</dbReference>
<dbReference type="ComplexPortal" id="CPX-8680">
    <property type="entry name" value="Nav1.7 voltage-gated sodium channel complex, SCN2B-SCN3B variant"/>
</dbReference>
<dbReference type="ComplexPortal" id="CPX-8683">
    <property type="entry name" value="Nav1.8 voltage-gated sodium channel complex, SCN3B-SCN4B variant"/>
</dbReference>
<dbReference type="ComplexPortal" id="CPX-8684">
    <property type="entry name" value="Nav1.8 voltage-gated sodium channel complex, SCN2B-SCN3B variant"/>
</dbReference>
<dbReference type="ComplexPortal" id="CPX-8687">
    <property type="entry name" value="Nav1.9 voltage-gated sodium channel complex, SCN3B-SCN4B variant"/>
</dbReference>
<dbReference type="ComplexPortal" id="CPX-8690">
    <property type="entry name" value="Nav1.9 voltage-gated sodium channel complex, SCN2B-SCN3B variant"/>
</dbReference>
<dbReference type="ComplexPortal" id="CPX-8691">
    <property type="entry name" value="Nax cation channel complex, SCN2B-SCN3B variant"/>
</dbReference>
<dbReference type="ComplexPortal" id="CPX-8692">
    <property type="entry name" value="Nax cation channel complex, SCN3B-SCN4B variant"/>
</dbReference>
<dbReference type="CORUM" id="Q9NY72"/>
<dbReference type="FunCoup" id="Q9NY72">
    <property type="interactions" value="440"/>
</dbReference>
<dbReference type="IntAct" id="Q9NY72">
    <property type="interactions" value="198"/>
</dbReference>
<dbReference type="MINT" id="Q9NY72"/>
<dbReference type="STRING" id="9606.ENSP00000376523"/>
<dbReference type="DrugBank" id="DB05541">
    <property type="generic name" value="Brivaracetam"/>
</dbReference>
<dbReference type="DrugBank" id="DB00907">
    <property type="generic name" value="Cocaine"/>
</dbReference>
<dbReference type="DrugBank" id="DB13269">
    <property type="generic name" value="Dichlorobenzyl alcohol"/>
</dbReference>
<dbReference type="DrugBank" id="DB13961">
    <property type="generic name" value="Fish oil"/>
</dbReference>
<dbReference type="DrugBank" id="DB00776">
    <property type="generic name" value="Oxcarbazepine"/>
</dbReference>
<dbReference type="DrugBank" id="DB00243">
    <property type="generic name" value="Ranolazine"/>
</dbReference>
<dbReference type="DrugBank" id="DB00313">
    <property type="generic name" value="Valproic acid"/>
</dbReference>
<dbReference type="DrugBank" id="DB00909">
    <property type="generic name" value="Zonisamide"/>
</dbReference>
<dbReference type="DrugCentral" id="Q9NY72"/>
<dbReference type="GlyCosmos" id="Q9NY72">
    <property type="glycosylation" value="4 sites, No reported glycans"/>
</dbReference>
<dbReference type="GlyGen" id="Q9NY72">
    <property type="glycosylation" value="4 sites"/>
</dbReference>
<dbReference type="PhosphoSitePlus" id="Q9NY72"/>
<dbReference type="BioMuta" id="SCN3B"/>
<dbReference type="DMDM" id="12229762"/>
<dbReference type="MassIVE" id="Q9NY72"/>
<dbReference type="PaxDb" id="9606-ENSP00000376523"/>
<dbReference type="PeptideAtlas" id="Q9NY72"/>
<dbReference type="ProteomicsDB" id="83185"/>
<dbReference type="Antibodypedia" id="18943">
    <property type="antibodies" value="149 antibodies from 23 providers"/>
</dbReference>
<dbReference type="DNASU" id="55800"/>
<dbReference type="Ensembl" id="ENST00000299333.8">
    <property type="protein sequence ID" value="ENSP00000299333.3"/>
    <property type="gene ID" value="ENSG00000166257.10"/>
</dbReference>
<dbReference type="Ensembl" id="ENST00000392770.6">
    <property type="protein sequence ID" value="ENSP00000376523.2"/>
    <property type="gene ID" value="ENSG00000166257.10"/>
</dbReference>
<dbReference type="Ensembl" id="ENST00000530277.5">
    <property type="protein sequence ID" value="ENSP00000432785.1"/>
    <property type="gene ID" value="ENSG00000166257.10"/>
</dbReference>
<dbReference type="Ensembl" id="ENST00000657123.1">
    <property type="protein sequence ID" value="ENSP00000499439.1"/>
    <property type="gene ID" value="ENSG00000166257.10"/>
</dbReference>
<dbReference type="Ensembl" id="ENST00000657191.1">
    <property type="protein sequence ID" value="ENSP00000499755.1"/>
    <property type="gene ID" value="ENSG00000166257.10"/>
</dbReference>
<dbReference type="GeneID" id="55800"/>
<dbReference type="KEGG" id="hsa:55800"/>
<dbReference type="MANE-Select" id="ENST00000299333.8">
    <property type="protein sequence ID" value="ENSP00000299333.3"/>
    <property type="RefSeq nucleotide sequence ID" value="NM_001040151.2"/>
    <property type="RefSeq protein sequence ID" value="NP_001035241.1"/>
</dbReference>
<dbReference type="UCSC" id="uc001pza.2">
    <property type="organism name" value="human"/>
</dbReference>
<dbReference type="AGR" id="HGNC:20665"/>
<dbReference type="CTD" id="55800"/>
<dbReference type="DisGeNET" id="55800"/>
<dbReference type="GeneCards" id="SCN3B"/>
<dbReference type="GeneReviews" id="SCN3B"/>
<dbReference type="HGNC" id="HGNC:20665">
    <property type="gene designation" value="SCN3B"/>
</dbReference>
<dbReference type="HPA" id="ENSG00000166257">
    <property type="expression patterns" value="Tissue enhanced (brain, pituitary gland)"/>
</dbReference>
<dbReference type="MalaCards" id="SCN3B"/>
<dbReference type="MIM" id="608214">
    <property type="type" value="gene"/>
</dbReference>
<dbReference type="MIM" id="613120">
    <property type="type" value="phenotype"/>
</dbReference>
<dbReference type="neXtProt" id="NX_Q9NY72"/>
<dbReference type="OpenTargets" id="ENSG00000166257"/>
<dbReference type="Orphanet" id="130">
    <property type="disease" value="Brugada syndrome"/>
</dbReference>
<dbReference type="Orphanet" id="334">
    <property type="disease" value="Familial atrial fibrillation"/>
</dbReference>
<dbReference type="PharmGKB" id="PA130546912"/>
<dbReference type="VEuPathDB" id="HostDB:ENSG00000166257"/>
<dbReference type="eggNOG" id="ENOG502QWH0">
    <property type="taxonomic scope" value="Eukaryota"/>
</dbReference>
<dbReference type="GeneTree" id="ENSGT00390000018560"/>
<dbReference type="HOGENOM" id="CLU_096296_1_0_1"/>
<dbReference type="InParanoid" id="Q9NY72"/>
<dbReference type="OMA" id="QGSHMKL"/>
<dbReference type="OrthoDB" id="9440529at2759"/>
<dbReference type="PAN-GO" id="Q9NY72">
    <property type="GO annotations" value="6 GO annotations based on evolutionary models"/>
</dbReference>
<dbReference type="PhylomeDB" id="Q9NY72"/>
<dbReference type="TreeFam" id="TF332097"/>
<dbReference type="PathwayCommons" id="Q9NY72"/>
<dbReference type="Reactome" id="R-HSA-445095">
    <property type="pathway name" value="Interaction between L1 and Ankyrins"/>
</dbReference>
<dbReference type="Reactome" id="R-HSA-5576892">
    <property type="pathway name" value="Phase 0 - rapid depolarisation"/>
</dbReference>
<dbReference type="SignaLink" id="Q9NY72"/>
<dbReference type="BioGRID-ORCS" id="55800">
    <property type="hits" value="16 hits in 1157 CRISPR screens"/>
</dbReference>
<dbReference type="EvolutionaryTrace" id="Q9NY72"/>
<dbReference type="GeneWiki" id="SCN3B"/>
<dbReference type="GenomeRNAi" id="55800"/>
<dbReference type="Pharos" id="Q9NY72">
    <property type="development level" value="Tbio"/>
</dbReference>
<dbReference type="PRO" id="PR:Q9NY72"/>
<dbReference type="Proteomes" id="UP000005640">
    <property type="component" value="Chromosome 11"/>
</dbReference>
<dbReference type="RNAct" id="Q9NY72">
    <property type="molecule type" value="protein"/>
</dbReference>
<dbReference type="Bgee" id="ENSG00000166257">
    <property type="expression patterns" value="Expressed in middle temporal gyrus and 127 other cell types or tissues"/>
</dbReference>
<dbReference type="ExpressionAtlas" id="Q9NY72">
    <property type="expression patterns" value="baseline and differential"/>
</dbReference>
<dbReference type="GO" id="GO:0005829">
    <property type="term" value="C:cytosol"/>
    <property type="evidence" value="ECO:0000314"/>
    <property type="project" value="HPA"/>
</dbReference>
<dbReference type="GO" id="GO:0043231">
    <property type="term" value="C:intracellular membrane-bounded organelle"/>
    <property type="evidence" value="ECO:0000314"/>
    <property type="project" value="HPA"/>
</dbReference>
<dbReference type="GO" id="GO:0016020">
    <property type="term" value="C:membrane"/>
    <property type="evidence" value="ECO:0000303"/>
    <property type="project" value="UniProtKB"/>
</dbReference>
<dbReference type="GO" id="GO:0005886">
    <property type="term" value="C:plasma membrane"/>
    <property type="evidence" value="ECO:0000314"/>
    <property type="project" value="UniProtKB"/>
</dbReference>
<dbReference type="GO" id="GO:0001518">
    <property type="term" value="C:voltage-gated sodium channel complex"/>
    <property type="evidence" value="ECO:0000314"/>
    <property type="project" value="UniProtKB"/>
</dbReference>
<dbReference type="GO" id="GO:0030018">
    <property type="term" value="C:Z disc"/>
    <property type="evidence" value="ECO:0000250"/>
    <property type="project" value="BHF-UCL"/>
</dbReference>
<dbReference type="GO" id="GO:0019871">
    <property type="term" value="F:sodium channel inhibitor activity"/>
    <property type="evidence" value="ECO:0000318"/>
    <property type="project" value="GO_Central"/>
</dbReference>
<dbReference type="GO" id="GO:0017080">
    <property type="term" value="F:sodium channel regulator activity"/>
    <property type="evidence" value="ECO:0000314"/>
    <property type="project" value="BHF-UCL"/>
</dbReference>
<dbReference type="GO" id="GO:0044325">
    <property type="term" value="F:transmembrane transporter binding"/>
    <property type="evidence" value="ECO:0000353"/>
    <property type="project" value="BHF-UCL"/>
</dbReference>
<dbReference type="GO" id="GO:0086006">
    <property type="term" value="F:voltage-gated sodium channel activity involved in cardiac muscle cell action potential"/>
    <property type="evidence" value="ECO:0007669"/>
    <property type="project" value="Ensembl"/>
</dbReference>
<dbReference type="GO" id="GO:0086014">
    <property type="term" value="P:atrial cardiac muscle cell action potential"/>
    <property type="evidence" value="ECO:0000315"/>
    <property type="project" value="BHF-UCL"/>
</dbReference>
<dbReference type="GO" id="GO:0086002">
    <property type="term" value="P:cardiac muscle cell action potential involved in contraction"/>
    <property type="evidence" value="ECO:0000315"/>
    <property type="project" value="BHF-UCL"/>
</dbReference>
<dbReference type="GO" id="GO:0060048">
    <property type="term" value="P:cardiac muscle contraction"/>
    <property type="evidence" value="ECO:0000315"/>
    <property type="project" value="BHF-UCL"/>
</dbReference>
<dbReference type="GO" id="GO:0051899">
    <property type="term" value="P:membrane depolarization"/>
    <property type="evidence" value="ECO:0000314"/>
    <property type="project" value="BHF-UCL"/>
</dbReference>
<dbReference type="GO" id="GO:0086010">
    <property type="term" value="P:membrane depolarization during action potential"/>
    <property type="evidence" value="ECO:0000314"/>
    <property type="project" value="BHF-UCL"/>
</dbReference>
<dbReference type="GO" id="GO:0086012">
    <property type="term" value="P:membrane depolarization during cardiac muscle cell action potential"/>
    <property type="evidence" value="ECO:0000315"/>
    <property type="project" value="BHF-UCL"/>
</dbReference>
<dbReference type="GO" id="GO:0007399">
    <property type="term" value="P:nervous system development"/>
    <property type="evidence" value="ECO:0007669"/>
    <property type="project" value="Ensembl"/>
</dbReference>
<dbReference type="GO" id="GO:0010460">
    <property type="term" value="P:positive regulation of heart rate"/>
    <property type="evidence" value="ECO:0000250"/>
    <property type="project" value="BHF-UCL"/>
</dbReference>
<dbReference type="GO" id="GO:0010765">
    <property type="term" value="P:positive regulation of sodium ion transport"/>
    <property type="evidence" value="ECO:0000314"/>
    <property type="project" value="BHF-UCL"/>
</dbReference>
<dbReference type="GO" id="GO:0072659">
    <property type="term" value="P:protein localization to plasma membrane"/>
    <property type="evidence" value="ECO:0000315"/>
    <property type="project" value="BHF-UCL"/>
</dbReference>
<dbReference type="GO" id="GO:0060371">
    <property type="term" value="P:regulation of atrial cardiac muscle cell membrane depolarization"/>
    <property type="evidence" value="ECO:0000315"/>
    <property type="project" value="BHF-UCL"/>
</dbReference>
<dbReference type="GO" id="GO:0086091">
    <property type="term" value="P:regulation of heart rate by cardiac conduction"/>
    <property type="evidence" value="ECO:0000315"/>
    <property type="project" value="BHF-UCL"/>
</dbReference>
<dbReference type="GO" id="GO:0060373">
    <property type="term" value="P:regulation of ventricular cardiac muscle cell membrane depolarization"/>
    <property type="evidence" value="ECO:0000315"/>
    <property type="project" value="BHF-UCL"/>
</dbReference>
<dbReference type="GO" id="GO:0086015">
    <property type="term" value="P:SA node cell action potential"/>
    <property type="evidence" value="ECO:0000250"/>
    <property type="project" value="BHF-UCL"/>
</dbReference>
<dbReference type="GO" id="GO:0035725">
    <property type="term" value="P:sodium ion transmembrane transport"/>
    <property type="evidence" value="ECO:0000314"/>
    <property type="project" value="BHF-UCL"/>
</dbReference>
<dbReference type="GO" id="GO:0006814">
    <property type="term" value="P:sodium ion transport"/>
    <property type="evidence" value="ECO:0000303"/>
    <property type="project" value="UniProtKB"/>
</dbReference>
<dbReference type="GO" id="GO:0086005">
    <property type="term" value="P:ventricular cardiac muscle cell action potential"/>
    <property type="evidence" value="ECO:0000315"/>
    <property type="project" value="BHF-UCL"/>
</dbReference>
<dbReference type="FunFam" id="2.60.40.10:FF:000375">
    <property type="entry name" value="Sodium channel beta 1 subunit"/>
    <property type="match status" value="1"/>
</dbReference>
<dbReference type="Gene3D" id="2.60.40.10">
    <property type="entry name" value="Immunoglobulins"/>
    <property type="match status" value="1"/>
</dbReference>
<dbReference type="InterPro" id="IPR007110">
    <property type="entry name" value="Ig-like_dom"/>
</dbReference>
<dbReference type="InterPro" id="IPR036179">
    <property type="entry name" value="Ig-like_dom_sf"/>
</dbReference>
<dbReference type="InterPro" id="IPR013783">
    <property type="entry name" value="Ig-like_fold"/>
</dbReference>
<dbReference type="InterPro" id="IPR003599">
    <property type="entry name" value="Ig_sub"/>
</dbReference>
<dbReference type="InterPro" id="IPR013106">
    <property type="entry name" value="Ig_V-set"/>
</dbReference>
<dbReference type="InterPro" id="IPR027098">
    <property type="entry name" value="Na_channel_b1/b3"/>
</dbReference>
<dbReference type="PANTHER" id="PTHR10546">
    <property type="entry name" value="SODIUM CHANNEL SUBUNIT BETA-1 AND 3"/>
    <property type="match status" value="1"/>
</dbReference>
<dbReference type="PANTHER" id="PTHR10546:SF1">
    <property type="entry name" value="SODIUM CHANNEL SUBUNIT BETA-3"/>
    <property type="match status" value="1"/>
</dbReference>
<dbReference type="Pfam" id="PF07686">
    <property type="entry name" value="V-set"/>
    <property type="match status" value="1"/>
</dbReference>
<dbReference type="SMART" id="SM00409">
    <property type="entry name" value="IG"/>
    <property type="match status" value="1"/>
</dbReference>
<dbReference type="SUPFAM" id="SSF48726">
    <property type="entry name" value="Immunoglobulin"/>
    <property type="match status" value="1"/>
</dbReference>
<dbReference type="PROSITE" id="PS50835">
    <property type="entry name" value="IG_LIKE"/>
    <property type="match status" value="1"/>
</dbReference>
<feature type="signal peptide" evidence="2">
    <location>
        <begin position="1"/>
        <end position="22"/>
    </location>
</feature>
<feature type="chain" id="PRO_0000014933" description="Sodium channel regulatory subunit beta-3">
    <location>
        <begin position="23"/>
        <end position="215"/>
    </location>
</feature>
<feature type="topological domain" description="Extracellular" evidence="13">
    <location>
        <begin position="23"/>
        <end position="156"/>
    </location>
</feature>
<feature type="transmembrane region" description="Helical" evidence="14 17">
    <location>
        <begin position="157"/>
        <end position="178"/>
    </location>
</feature>
<feature type="topological domain" description="Cytoplasmic" evidence="13">
    <location>
        <begin position="179"/>
        <end position="215"/>
    </location>
</feature>
<feature type="domain" description="Ig-like C2-type" evidence="2">
    <location>
        <begin position="32"/>
        <end position="154"/>
    </location>
</feature>
<feature type="glycosylation site" description="N-linked (GlcNAc...) asparagine" evidence="2">
    <location>
        <position position="95"/>
    </location>
</feature>
<feature type="glycosylation site" description="N-linked (GlcNAc...) asparagine" evidence="2">
    <location>
        <position position="109"/>
    </location>
</feature>
<feature type="glycosylation site" description="N-linked (GlcNAc...) asparagine" evidence="2">
    <location>
        <position position="113"/>
    </location>
</feature>
<feature type="glycosylation site" description="N-linked (GlcNAc...) asparagine" evidence="2">
    <location>
        <position position="121"/>
    </location>
</feature>
<feature type="disulfide bond" evidence="3 10 12 16 18">
    <location>
        <begin position="26"/>
        <end position="48"/>
    </location>
</feature>
<feature type="disulfide bond" evidence="3 10 12 16 18">
    <location>
        <begin position="45"/>
        <end position="120"/>
    </location>
</feature>
<feature type="sequence variant" id="VAR_071314" description="In ATFB16; affects steady-state channel inactivation; dbSNP:rs587777558." evidence="9">
    <original>R</original>
    <variation>K</variation>
    <location>
        <position position="6"/>
    </location>
</feature>
<feature type="sequence variant" id="VAR_062529" description="In BRGDA7 and ATFB16; uncertain significance; results in a decrease in peak sodium current density; dbSNP:rs121918282." evidence="6 9">
    <original>L</original>
    <variation>P</variation>
    <location>
        <position position="10"/>
    </location>
</feature>
<feature type="sequence variant" id="VAR_065232" description="Found in a case of idiopathic ventricular fibrillation; uncertain significance; dbSNP:rs587777555." evidence="7">
    <original>V</original>
    <variation>G</variation>
    <location>
        <position position="54"/>
    </location>
</feature>
<feature type="sequence variant" id="VAR_035521" description="In a colorectal cancer sample; somatic mutation." evidence="5">
    <original>Q</original>
    <variation>L</variation>
    <location>
        <position position="89"/>
    </location>
</feature>
<feature type="sequence variant" id="VAR_049928" description="In dbSNP:rs35174956.">
    <original>S</original>
    <variation>N</variation>
    <location>
        <position position="97"/>
    </location>
</feature>
<feature type="sequence variant" id="VAR_071315" description="In ATFB16; results in decreased sodium current density; dbSNP:rs587777556." evidence="8">
    <original>A</original>
    <variation>V</variation>
    <location>
        <position position="130"/>
    </location>
</feature>
<feature type="sequence variant" id="VAR_071316" description="In ATFB16; results in a decrease in peak sodium current density; dbSNP:rs587777557." evidence="9">
    <original>M</original>
    <variation>T</variation>
    <location>
        <position position="161"/>
    </location>
</feature>
<feature type="sequence variant" id="VAR_035522" description="In a colorectal cancer sample; somatic mutation; dbSNP:rs375755770." evidence="5">
    <original>A</original>
    <variation>T</variation>
    <location>
        <position position="195"/>
    </location>
</feature>
<feature type="mutagenesis site" description="Decreased voltage-gated sodium channel oligomeric complex assembly." evidence="10">
    <original>C</original>
    <variation>A</variation>
    <location>
        <position position="48"/>
    </location>
</feature>
<feature type="strand" evidence="19">
    <location>
        <begin position="34"/>
        <end position="36"/>
    </location>
</feature>
<feature type="strand" evidence="19">
    <location>
        <begin position="41"/>
        <end position="43"/>
    </location>
</feature>
<feature type="strand" evidence="19">
    <location>
        <begin position="57"/>
        <end position="65"/>
    </location>
</feature>
<feature type="strand" evidence="20">
    <location>
        <begin position="66"/>
        <end position="68"/>
    </location>
</feature>
<feature type="strand" evidence="19">
    <location>
        <begin position="72"/>
        <end position="82"/>
    </location>
</feature>
<feature type="turn" evidence="19">
    <location>
        <begin position="87"/>
        <end position="90"/>
    </location>
</feature>
<feature type="strand" evidence="19">
    <location>
        <begin position="91"/>
        <end position="94"/>
    </location>
</feature>
<feature type="strand" evidence="19">
    <location>
        <begin position="100"/>
        <end position="102"/>
    </location>
</feature>
<feature type="strand" evidence="19">
    <location>
        <begin position="105"/>
        <end position="107"/>
    </location>
</feature>
<feature type="helix" evidence="19">
    <location>
        <begin position="112"/>
        <end position="114"/>
    </location>
</feature>
<feature type="strand" evidence="19">
    <location>
        <begin position="116"/>
        <end position="125"/>
    </location>
</feature>
<feature type="strand" evidence="19">
    <location>
        <begin position="135"/>
        <end position="145"/>
    </location>
</feature>
<feature type="helix" evidence="21">
    <location>
        <begin position="153"/>
        <end position="185"/>
    </location>
</feature>
<evidence type="ECO:0000250" key="1">
    <source>
        <dbReference type="UniProtKB" id="Q9JK00"/>
    </source>
</evidence>
<evidence type="ECO:0000255" key="2"/>
<evidence type="ECO:0000255" key="3">
    <source>
        <dbReference type="PROSITE-ProRule" id="PRU00114"/>
    </source>
</evidence>
<evidence type="ECO:0000269" key="4">
    <source>
    </source>
</evidence>
<evidence type="ECO:0000269" key="5">
    <source>
    </source>
</evidence>
<evidence type="ECO:0000269" key="6">
    <source>
    </source>
</evidence>
<evidence type="ECO:0000269" key="7">
    <source>
    </source>
</evidence>
<evidence type="ECO:0000269" key="8">
    <source>
    </source>
</evidence>
<evidence type="ECO:0000269" key="9">
    <source>
    </source>
</evidence>
<evidence type="ECO:0000269" key="10">
    <source>
    </source>
</evidence>
<evidence type="ECO:0000269" key="11">
    <source>
    </source>
</evidence>
<evidence type="ECO:0000269" key="12">
    <source>
    </source>
</evidence>
<evidence type="ECO:0000305" key="13"/>
<evidence type="ECO:0000305" key="14">
    <source>
    </source>
</evidence>
<evidence type="ECO:0000312" key="15">
    <source>
        <dbReference type="HGNC" id="HGNC:20665"/>
    </source>
</evidence>
<evidence type="ECO:0007744" key="16">
    <source>
        <dbReference type="PDB" id="4L1D"/>
    </source>
</evidence>
<evidence type="ECO:0007744" key="17">
    <source>
        <dbReference type="PDB" id="7TJ8"/>
    </source>
</evidence>
<evidence type="ECO:0007744" key="18">
    <source>
        <dbReference type="PDB" id="7TJ9"/>
    </source>
</evidence>
<evidence type="ECO:0007829" key="19">
    <source>
        <dbReference type="PDB" id="4L1D"/>
    </source>
</evidence>
<evidence type="ECO:0007829" key="20">
    <source>
        <dbReference type="PDB" id="7TJ8"/>
    </source>
</evidence>
<evidence type="ECO:0007829" key="21">
    <source>
        <dbReference type="PDB" id="7TJ9"/>
    </source>
</evidence>
<name>SCN3B_HUMAN</name>
<accession>Q9NY72</accession>
<accession>A5H1I5</accession>
<accession>Q17RL3</accession>
<accession>Q9ULR2</accession>
<proteinExistence type="evidence at protein level"/>
<keyword id="KW-0002">3D-structure</keyword>
<keyword id="KW-1020">Atrial fibrillation</keyword>
<keyword id="KW-0992">Brugada syndrome</keyword>
<keyword id="KW-1003">Cell membrane</keyword>
<keyword id="KW-0225">Disease variant</keyword>
<keyword id="KW-1015">Disulfide bond</keyword>
<keyword id="KW-0325">Glycoprotein</keyword>
<keyword id="KW-0393">Immunoglobulin domain</keyword>
<keyword id="KW-0407">Ion channel</keyword>
<keyword id="KW-0406">Ion transport</keyword>
<keyword id="KW-0472">Membrane</keyword>
<keyword id="KW-1267">Proteomics identification</keyword>
<keyword id="KW-1185">Reference proteome</keyword>
<keyword id="KW-0732">Signal</keyword>
<keyword id="KW-0915">Sodium</keyword>
<keyword id="KW-0894">Sodium channel</keyword>
<keyword id="KW-0739">Sodium transport</keyword>
<keyword id="KW-0812">Transmembrane</keyword>
<keyword id="KW-1133">Transmembrane helix</keyword>
<keyword id="KW-0813">Transport</keyword>
<keyword id="KW-0851">Voltage-gated channel</keyword>
<sequence length="215" mass="24702">MPAFNRLFPLASLVLIYWVSVCFPVCVEVPSETEAVQGNPMKLRCISCMKREEVEATTVVEWFYRPEGGKDFLIYEYRNGHQEVESPFQGRLQWNGSKDLQDVSITVLNVTLNDSGLYTCNVSREFEFEAHRPFVKTTRLIPLRVTEEAGEDFTSVVSEIMMYILLVFLTLWLLIEMIYCYRKVSKAEEAAQENASDYLAIPSENKENSAVPVEE</sequence>
<organism>
    <name type="scientific">Homo sapiens</name>
    <name type="common">Human</name>
    <dbReference type="NCBI Taxonomy" id="9606"/>
    <lineage>
        <taxon>Eukaryota</taxon>
        <taxon>Metazoa</taxon>
        <taxon>Chordata</taxon>
        <taxon>Craniata</taxon>
        <taxon>Vertebrata</taxon>
        <taxon>Euteleostomi</taxon>
        <taxon>Mammalia</taxon>
        <taxon>Eutheria</taxon>
        <taxon>Euarchontoglires</taxon>
        <taxon>Primates</taxon>
        <taxon>Haplorrhini</taxon>
        <taxon>Catarrhini</taxon>
        <taxon>Hominidae</taxon>
        <taxon>Homo</taxon>
    </lineage>
</organism>